<proteinExistence type="inferred from homology"/>
<name>TRPA_THEFY</name>
<accession>Q47QR3</accession>
<dbReference type="EC" id="4.2.1.20" evidence="1"/>
<dbReference type="EMBL" id="CP000088">
    <property type="protein sequence ID" value="AAZ55204.1"/>
    <property type="molecule type" value="Genomic_DNA"/>
</dbReference>
<dbReference type="RefSeq" id="WP_011291613.1">
    <property type="nucleotide sequence ID" value="NC_007333.1"/>
</dbReference>
<dbReference type="SMR" id="Q47QR3"/>
<dbReference type="STRING" id="269800.Tfu_1166"/>
<dbReference type="KEGG" id="tfu:Tfu_1166"/>
<dbReference type="eggNOG" id="COG0159">
    <property type="taxonomic scope" value="Bacteria"/>
</dbReference>
<dbReference type="HOGENOM" id="CLU_016734_0_0_11"/>
<dbReference type="OrthoDB" id="9804578at2"/>
<dbReference type="UniPathway" id="UPA00035">
    <property type="reaction ID" value="UER00044"/>
</dbReference>
<dbReference type="GO" id="GO:0005829">
    <property type="term" value="C:cytosol"/>
    <property type="evidence" value="ECO:0007669"/>
    <property type="project" value="TreeGrafter"/>
</dbReference>
<dbReference type="GO" id="GO:0004834">
    <property type="term" value="F:tryptophan synthase activity"/>
    <property type="evidence" value="ECO:0007669"/>
    <property type="project" value="UniProtKB-UniRule"/>
</dbReference>
<dbReference type="CDD" id="cd04724">
    <property type="entry name" value="Tryptophan_synthase_alpha"/>
    <property type="match status" value="1"/>
</dbReference>
<dbReference type="FunFam" id="3.20.20.70:FF:000037">
    <property type="entry name" value="Tryptophan synthase alpha chain"/>
    <property type="match status" value="1"/>
</dbReference>
<dbReference type="Gene3D" id="3.20.20.70">
    <property type="entry name" value="Aldolase class I"/>
    <property type="match status" value="1"/>
</dbReference>
<dbReference type="HAMAP" id="MF_00131">
    <property type="entry name" value="Trp_synth_alpha"/>
    <property type="match status" value="1"/>
</dbReference>
<dbReference type="InterPro" id="IPR013785">
    <property type="entry name" value="Aldolase_TIM"/>
</dbReference>
<dbReference type="InterPro" id="IPR011060">
    <property type="entry name" value="RibuloseP-bd_barrel"/>
</dbReference>
<dbReference type="InterPro" id="IPR002028">
    <property type="entry name" value="Trp_synthase_suA"/>
</dbReference>
<dbReference type="NCBIfam" id="TIGR00262">
    <property type="entry name" value="trpA"/>
    <property type="match status" value="1"/>
</dbReference>
<dbReference type="PANTHER" id="PTHR43406:SF1">
    <property type="entry name" value="TRYPTOPHAN SYNTHASE ALPHA CHAIN, CHLOROPLASTIC"/>
    <property type="match status" value="1"/>
</dbReference>
<dbReference type="PANTHER" id="PTHR43406">
    <property type="entry name" value="TRYPTOPHAN SYNTHASE, ALPHA CHAIN"/>
    <property type="match status" value="1"/>
</dbReference>
<dbReference type="Pfam" id="PF00290">
    <property type="entry name" value="Trp_syntA"/>
    <property type="match status" value="1"/>
</dbReference>
<dbReference type="SUPFAM" id="SSF51366">
    <property type="entry name" value="Ribulose-phoshate binding barrel"/>
    <property type="match status" value="1"/>
</dbReference>
<feature type="chain" id="PRO_1000057857" description="Tryptophan synthase alpha chain">
    <location>
        <begin position="1"/>
        <end position="270"/>
    </location>
</feature>
<feature type="active site" description="Proton acceptor" evidence="1">
    <location>
        <position position="49"/>
    </location>
</feature>
<feature type="active site" description="Proton acceptor" evidence="1">
    <location>
        <position position="60"/>
    </location>
</feature>
<evidence type="ECO:0000255" key="1">
    <source>
        <dbReference type="HAMAP-Rule" id="MF_00131"/>
    </source>
</evidence>
<keyword id="KW-0028">Amino-acid biosynthesis</keyword>
<keyword id="KW-0057">Aromatic amino acid biosynthesis</keyword>
<keyword id="KW-0456">Lyase</keyword>
<keyword id="KW-0822">Tryptophan biosynthesis</keyword>
<gene>
    <name evidence="1" type="primary">trpA</name>
    <name type="ordered locus">Tfu_1166</name>
</gene>
<reference key="1">
    <citation type="journal article" date="2007" name="J. Bacteriol.">
        <title>Genome sequence and analysis of the soil cellulolytic actinomycete Thermobifida fusca YX.</title>
        <authorList>
            <person name="Lykidis A."/>
            <person name="Mavromatis K."/>
            <person name="Ivanova N."/>
            <person name="Anderson I."/>
            <person name="Land M."/>
            <person name="DiBartolo G."/>
            <person name="Martinez M."/>
            <person name="Lapidus A."/>
            <person name="Lucas S."/>
            <person name="Copeland A."/>
            <person name="Richardson P."/>
            <person name="Wilson D.B."/>
            <person name="Kyrpides N."/>
        </authorList>
    </citation>
    <scope>NUCLEOTIDE SEQUENCE [LARGE SCALE GENOMIC DNA]</scope>
    <source>
        <strain>YX</strain>
    </source>
</reference>
<comment type="function">
    <text evidence="1">The alpha subunit is responsible for the aldol cleavage of indoleglycerol phosphate to indole and glyceraldehyde 3-phosphate.</text>
</comment>
<comment type="catalytic activity">
    <reaction evidence="1">
        <text>(1S,2R)-1-C-(indol-3-yl)glycerol 3-phosphate + L-serine = D-glyceraldehyde 3-phosphate + L-tryptophan + H2O</text>
        <dbReference type="Rhea" id="RHEA:10532"/>
        <dbReference type="ChEBI" id="CHEBI:15377"/>
        <dbReference type="ChEBI" id="CHEBI:33384"/>
        <dbReference type="ChEBI" id="CHEBI:57912"/>
        <dbReference type="ChEBI" id="CHEBI:58866"/>
        <dbReference type="ChEBI" id="CHEBI:59776"/>
        <dbReference type="EC" id="4.2.1.20"/>
    </reaction>
</comment>
<comment type="pathway">
    <text evidence="1">Amino-acid biosynthesis; L-tryptophan biosynthesis; L-tryptophan from chorismate: step 5/5.</text>
</comment>
<comment type="subunit">
    <text evidence="1">Tetramer of two alpha and two beta chains.</text>
</comment>
<comment type="similarity">
    <text evidence="1">Belongs to the TrpA family.</text>
</comment>
<protein>
    <recommendedName>
        <fullName evidence="1">Tryptophan synthase alpha chain</fullName>
        <ecNumber evidence="1">4.2.1.20</ecNumber>
    </recommendedName>
</protein>
<organism>
    <name type="scientific">Thermobifida fusca (strain YX)</name>
    <dbReference type="NCBI Taxonomy" id="269800"/>
    <lineage>
        <taxon>Bacteria</taxon>
        <taxon>Bacillati</taxon>
        <taxon>Actinomycetota</taxon>
        <taxon>Actinomycetes</taxon>
        <taxon>Streptosporangiales</taxon>
        <taxon>Nocardiopsidaceae</taxon>
        <taxon>Thermobifida</taxon>
    </lineage>
</organism>
<sequence>MTVLRRKLAEAKAEGRAALVGYYPAGFPDVASSIRVVQAMVAGGCDVIEVGFPYSDPTMDGPVIQQAADRALAAGTTPKDVLAVVRAVADAGAAALVMSYWNPIEKYGVDAFAADLAAAGGSGLITPDLIPEEAEPWIKASDAAGIDRIFLVAPSSTDERLAKTCAASRGFVYAASLMGVTGTRDKVAATARRLVERTRAVTRDSGLPICVGLGISNGAQAAEVASYADGVIVGTGFCQRVLDAPDVDTACQQVRDFAAELAAGVRAAAR</sequence>